<feature type="chain" id="PRO_0000086916" description="Shuttling pre-60S factor ECM1">
    <location>
        <begin position="1"/>
        <end position="212"/>
    </location>
</feature>
<feature type="region of interest" description="Disordered" evidence="1">
    <location>
        <begin position="28"/>
        <end position="48"/>
    </location>
</feature>
<feature type="region of interest" description="Disordered" evidence="1">
    <location>
        <begin position="188"/>
        <end position="212"/>
    </location>
</feature>
<feature type="compositionally biased region" description="Polar residues" evidence="1">
    <location>
        <begin position="191"/>
        <end position="201"/>
    </location>
</feature>
<feature type="modified residue" description="Phosphoserine" evidence="6">
    <location>
        <position position="188"/>
    </location>
</feature>
<feature type="sequence conflict" description="In Ref. 1; AAC04975." evidence="5" ref="1">
    <original>A</original>
    <variation>D</variation>
    <location>
        <position position="102"/>
    </location>
</feature>
<name>ECM1_YEAST</name>
<dbReference type="EMBL" id="U12980">
    <property type="protein sequence ID" value="AAC04975.1"/>
    <property type="molecule type" value="Genomic_DNA"/>
</dbReference>
<dbReference type="EMBL" id="AY558168">
    <property type="protein sequence ID" value="AAS56494.1"/>
    <property type="molecule type" value="Genomic_DNA"/>
</dbReference>
<dbReference type="EMBL" id="BK006935">
    <property type="protein sequence ID" value="DAA06930.2"/>
    <property type="molecule type" value="Genomic_DNA"/>
</dbReference>
<dbReference type="PIR" id="S51963">
    <property type="entry name" value="S51963"/>
</dbReference>
<dbReference type="RefSeq" id="NP_009342.2">
    <property type="nucleotide sequence ID" value="NM_001178201.2"/>
</dbReference>
<dbReference type="PDB" id="8HFR">
    <property type="method" value="EM"/>
    <property type="resolution" value="2.64 A"/>
    <property type="chains" value="xI=1-212"/>
</dbReference>
<dbReference type="PDBsum" id="8HFR"/>
<dbReference type="EMDB" id="EMD-34725"/>
<dbReference type="SMR" id="P39715"/>
<dbReference type="BioGRID" id="31771">
    <property type="interactions" value="201"/>
</dbReference>
<dbReference type="DIP" id="DIP-2465N"/>
<dbReference type="FunCoup" id="P39715">
    <property type="interactions" value="215"/>
</dbReference>
<dbReference type="IntAct" id="P39715">
    <property type="interactions" value="69"/>
</dbReference>
<dbReference type="MINT" id="P39715"/>
<dbReference type="STRING" id="4932.YAL059W"/>
<dbReference type="GlyGen" id="P39715">
    <property type="glycosylation" value="2 sites, 1 O-linked glycan (2 sites)"/>
</dbReference>
<dbReference type="iPTMnet" id="P39715"/>
<dbReference type="PaxDb" id="4932-YAL059W"/>
<dbReference type="PeptideAtlas" id="P39715"/>
<dbReference type="EnsemblFungi" id="YAL059W_mRNA">
    <property type="protein sequence ID" value="YAL059W"/>
    <property type="gene ID" value="YAL059W"/>
</dbReference>
<dbReference type="GeneID" id="851240"/>
<dbReference type="KEGG" id="sce:YAL059W"/>
<dbReference type="AGR" id="SGD:S000000055"/>
<dbReference type="SGD" id="S000000055">
    <property type="gene designation" value="ECM1"/>
</dbReference>
<dbReference type="VEuPathDB" id="FungiDB:YAL059W"/>
<dbReference type="eggNOG" id="ENOG502S24Y">
    <property type="taxonomic scope" value="Eukaryota"/>
</dbReference>
<dbReference type="HOGENOM" id="CLU_090725_0_0_1"/>
<dbReference type="InParanoid" id="P39715"/>
<dbReference type="OMA" id="NTRKAGW"/>
<dbReference type="OrthoDB" id="4068492at2759"/>
<dbReference type="BioCyc" id="YEAST:G3O-28862-MONOMER"/>
<dbReference type="BioGRID-ORCS" id="851240">
    <property type="hits" value="0 hits in 10 CRISPR screens"/>
</dbReference>
<dbReference type="PRO" id="PR:P39715"/>
<dbReference type="Proteomes" id="UP000002311">
    <property type="component" value="Chromosome I"/>
</dbReference>
<dbReference type="RNAct" id="P39715">
    <property type="molecule type" value="protein"/>
</dbReference>
<dbReference type="GO" id="GO:0005737">
    <property type="term" value="C:cytoplasm"/>
    <property type="evidence" value="ECO:0007669"/>
    <property type="project" value="UniProtKB-SubCell"/>
</dbReference>
<dbReference type="GO" id="GO:0005730">
    <property type="term" value="C:nucleolus"/>
    <property type="evidence" value="ECO:0000314"/>
    <property type="project" value="SGD"/>
</dbReference>
<dbReference type="GO" id="GO:0005634">
    <property type="term" value="C:nucleus"/>
    <property type="evidence" value="ECO:0000314"/>
    <property type="project" value="SGD"/>
</dbReference>
<dbReference type="GO" id="GO:0030687">
    <property type="term" value="C:preribosome, large subunit precursor"/>
    <property type="evidence" value="ECO:0000314"/>
    <property type="project" value="SGD"/>
</dbReference>
<dbReference type="GO" id="GO:0000055">
    <property type="term" value="P:ribosomal large subunit export from nucleus"/>
    <property type="evidence" value="ECO:0000316"/>
    <property type="project" value="SGD"/>
</dbReference>
<dbReference type="InterPro" id="IPR053278">
    <property type="entry name" value="Pre-60S_factor_ECM1"/>
</dbReference>
<dbReference type="InterPro" id="IPR022784">
    <property type="entry name" value="Ribosome_bgen_Alb1"/>
</dbReference>
<dbReference type="PANTHER" id="PTHR28280">
    <property type="entry name" value="SHUTTLING PRE-60S FACTOR ECM1"/>
    <property type="match status" value="1"/>
</dbReference>
<dbReference type="PANTHER" id="PTHR28280:SF1">
    <property type="entry name" value="SHUTTLING PRE-60S FACTOR ECM1"/>
    <property type="match status" value="1"/>
</dbReference>
<dbReference type="Pfam" id="PF09135">
    <property type="entry name" value="Alb1"/>
    <property type="match status" value="1"/>
</dbReference>
<keyword id="KW-0002">3D-structure</keyword>
<keyword id="KW-0963">Cytoplasm</keyword>
<keyword id="KW-0539">Nucleus</keyword>
<keyword id="KW-0597">Phosphoprotein</keyword>
<keyword id="KW-1185">Reference proteome</keyword>
<keyword id="KW-0690">Ribosome biogenesis</keyword>
<keyword id="KW-0813">Transport</keyword>
<organism>
    <name type="scientific">Saccharomyces cerevisiae (strain ATCC 204508 / S288c)</name>
    <name type="common">Baker's yeast</name>
    <dbReference type="NCBI Taxonomy" id="559292"/>
    <lineage>
        <taxon>Eukaryota</taxon>
        <taxon>Fungi</taxon>
        <taxon>Dikarya</taxon>
        <taxon>Ascomycota</taxon>
        <taxon>Saccharomycotina</taxon>
        <taxon>Saccharomycetes</taxon>
        <taxon>Saccharomycetales</taxon>
        <taxon>Saccharomycetaceae</taxon>
        <taxon>Saccharomyces</taxon>
    </lineage>
</organism>
<protein>
    <recommendedName>
        <fullName>Shuttling pre-60S factor ECM1</fullName>
    </recommendedName>
    <alternativeName>
        <fullName>Extracellular mutant protein 1</fullName>
    </alternativeName>
    <alternativeName>
        <fullName>Protein SIM1</fullName>
    </alternativeName>
</protein>
<evidence type="ECO:0000256" key="1">
    <source>
        <dbReference type="SAM" id="MobiDB-lite"/>
    </source>
</evidence>
<evidence type="ECO:0000269" key="2">
    <source>
    </source>
</evidence>
<evidence type="ECO:0000269" key="3">
    <source>
    </source>
</evidence>
<evidence type="ECO:0000269" key="4">
    <source>
    </source>
</evidence>
<evidence type="ECO:0000305" key="5"/>
<evidence type="ECO:0007744" key="6">
    <source>
    </source>
</evidence>
<accession>P39715</accession>
<accession>D6VPG0</accession>
<accession>E9P8V4</accession>
<reference key="1">
    <citation type="journal article" date="1995" name="Proc. Natl. Acad. Sci. U.S.A.">
        <title>The nucleotide sequence of chromosome I from Saccharomyces cerevisiae.</title>
        <authorList>
            <person name="Bussey H."/>
            <person name="Kaback D.B."/>
            <person name="Zhong W.-W."/>
            <person name="Vo D.H."/>
            <person name="Clark M.W."/>
            <person name="Fortin N."/>
            <person name="Hall J."/>
            <person name="Ouellette B.F.F."/>
            <person name="Keng T."/>
            <person name="Barton A.B."/>
            <person name="Su Y."/>
            <person name="Davies C.J."/>
            <person name="Storms R.K."/>
        </authorList>
    </citation>
    <scope>NUCLEOTIDE SEQUENCE [LARGE SCALE GENOMIC DNA]</scope>
    <source>
        <strain>ATCC 204508 / S288c</strain>
    </source>
</reference>
<reference key="2">
    <citation type="journal article" date="2014" name="G3 (Bethesda)">
        <title>The reference genome sequence of Saccharomyces cerevisiae: Then and now.</title>
        <authorList>
            <person name="Engel S.R."/>
            <person name="Dietrich F.S."/>
            <person name="Fisk D.G."/>
            <person name="Binkley G."/>
            <person name="Balakrishnan R."/>
            <person name="Costanzo M.C."/>
            <person name="Dwight S.S."/>
            <person name="Hitz B.C."/>
            <person name="Karra K."/>
            <person name="Nash R.S."/>
            <person name="Weng S."/>
            <person name="Wong E.D."/>
            <person name="Lloyd P."/>
            <person name="Skrzypek M.S."/>
            <person name="Miyasato S.R."/>
            <person name="Simison M."/>
            <person name="Cherry J.M."/>
        </authorList>
    </citation>
    <scope>GENOME REANNOTATION</scope>
    <scope>SEQUENCE REVISION TO 102</scope>
    <source>
        <strain>ATCC 204508 / S288c</strain>
    </source>
</reference>
<reference key="3">
    <citation type="journal article" date="2007" name="Genome Res.">
        <title>Approaching a complete repository of sequence-verified protein-encoding clones for Saccharomyces cerevisiae.</title>
        <authorList>
            <person name="Hu Y."/>
            <person name="Rolfs A."/>
            <person name="Bhullar B."/>
            <person name="Murthy T.V.S."/>
            <person name="Zhu C."/>
            <person name="Berger M.F."/>
            <person name="Camargo A.A."/>
            <person name="Kelley F."/>
            <person name="McCarron S."/>
            <person name="Jepson D."/>
            <person name="Richardson A."/>
            <person name="Raphael J."/>
            <person name="Moreira D."/>
            <person name="Taycher E."/>
            <person name="Zuo D."/>
            <person name="Mohr S."/>
            <person name="Kane M.F."/>
            <person name="Williamson J."/>
            <person name="Simpson A.J.G."/>
            <person name="Bulyk M.L."/>
            <person name="Harlow E."/>
            <person name="Marsischky G."/>
            <person name="Kolodner R.D."/>
            <person name="LaBaer J."/>
        </authorList>
    </citation>
    <scope>NUCLEOTIDE SEQUENCE [GENOMIC DNA]</scope>
    <source>
        <strain>ATCC 204508 / S288c</strain>
    </source>
</reference>
<reference key="4">
    <citation type="journal article" date="2001" name="Mol. Cell">
        <title>Identification of a 60S preribosomal particle that is closely linked to nuclear export.</title>
        <authorList>
            <person name="Bassler J."/>
            <person name="Grandi P."/>
            <person name="Gadal O."/>
            <person name="Lessmann T."/>
            <person name="Petfalski E."/>
            <person name="Tollervey D."/>
            <person name="Lechner J."/>
            <person name="Hurt E."/>
        </authorList>
    </citation>
    <scope>FUNCTION</scope>
    <scope>SUBCELLULAR LOCATION</scope>
</reference>
<reference key="5">
    <citation type="journal article" date="2003" name="Nature">
        <title>Global analysis of protein localization in budding yeast.</title>
        <authorList>
            <person name="Huh W.-K."/>
            <person name="Falvo J.V."/>
            <person name="Gerke L.C."/>
            <person name="Carroll A.S."/>
            <person name="Howson R.W."/>
            <person name="Weissman J.S."/>
            <person name="O'Shea E.K."/>
        </authorList>
    </citation>
    <scope>SUBCELLULAR LOCATION [LARGE SCALE ANALYSIS]</scope>
</reference>
<reference key="6">
    <citation type="journal article" date="2003" name="Nature">
        <title>Global analysis of protein expression in yeast.</title>
        <authorList>
            <person name="Ghaemmaghami S."/>
            <person name="Huh W.-K."/>
            <person name="Bower K."/>
            <person name="Howson R.W."/>
            <person name="Belle A."/>
            <person name="Dephoure N."/>
            <person name="O'Shea E.K."/>
            <person name="Weissman J.S."/>
        </authorList>
    </citation>
    <scope>LEVEL OF PROTEIN EXPRESSION [LARGE SCALE ANALYSIS]</scope>
</reference>
<reference key="7">
    <citation type="journal article" date="2009" name="Science">
        <title>Global analysis of Cdk1 substrate phosphorylation sites provides insights into evolution.</title>
        <authorList>
            <person name="Holt L.J."/>
            <person name="Tuch B.B."/>
            <person name="Villen J."/>
            <person name="Johnson A.D."/>
            <person name="Gygi S.P."/>
            <person name="Morgan D.O."/>
        </authorList>
    </citation>
    <scope>PHOSPHORYLATION [LARGE SCALE ANALYSIS] AT SER-188</scope>
    <scope>IDENTIFICATION BY MASS SPECTROMETRY [LARGE SCALE ANALYSIS]</scope>
</reference>
<reference key="8">
    <citation type="journal article" date="2010" name="RNA">
        <title>Ecm1 is a new pre-ribosomal factor involved in pre-60S particle export.</title>
        <authorList>
            <person name="Yao Y."/>
            <person name="Demoinet E."/>
            <person name="Saveanu C."/>
            <person name="Lenormand P."/>
            <person name="Jacquier A."/>
            <person name="Fromont-Racine M."/>
        </authorList>
    </citation>
    <scope>FUNCTION</scope>
    <scope>SUBCELLULAR LOCATION</scope>
    <scope>ASSOCIATION WITH THE PRE-60S PARTICLE AND THE NUCLEOPORE COMPLEX</scope>
</reference>
<comment type="function">
    <text evidence="2 4">Pre-ribosomal factor involved in 60S ribosomal protein subunit export from the nucleus.</text>
</comment>
<comment type="subunit">
    <text>Associates with the pre-60S ribosomal particle and the nucleopore complex.</text>
</comment>
<comment type="subcellular location">
    <subcellularLocation>
        <location>Nucleus</location>
        <location>Nucleolus</location>
    </subcellularLocation>
    <subcellularLocation>
        <location>Nucleus</location>
    </subcellularLocation>
    <subcellularLocation>
        <location>Cytoplasm</location>
    </subcellularLocation>
    <text>Shuttles between the nucleus and the cytoplasm and is re-imported by the KAP123 karyopherin.</text>
</comment>
<comment type="miscellaneous">
    <text evidence="3">Present with 2840 molecules/cell in log phase SD medium.</text>
</comment>
<comment type="similarity">
    <text evidence="5">Belongs to the ECM1 family.</text>
</comment>
<gene>
    <name type="primary">ECM1</name>
    <name type="synonym">SIM1</name>
    <name type="ordered locus">YAL059W</name>
</gene>
<sequence length="212" mass="23891">MWEQRRQKVVFSLTILVRYRLKQSMAKKISKNSRAARQSDALEPEVKDLSELPRAEKTDLTNILIRTAAKNEALLEAKISKKANKSKRGKKLNKKALEDKLANSISSMDRDRLVKALNFTNRLDGKIAKSISRAKYIQNTRKAGWDSTNETIKKELAFLNGGLSVQAKSASEGNAEKEDEEIPEVFDSLAEDNTVQKTPTNRFGVLPDDVEE</sequence>
<proteinExistence type="evidence at protein level"/>